<protein>
    <recommendedName>
        <fullName evidence="1">Carbamoyl phosphate synthase small chain</fullName>
        <ecNumber evidence="1">6.3.5.5</ecNumber>
    </recommendedName>
    <alternativeName>
        <fullName evidence="1">Carbamoyl phosphate synthetase glutamine chain</fullName>
    </alternativeName>
</protein>
<name>CARA_FUSNN</name>
<reference key="1">
    <citation type="journal article" date="2002" name="J. Bacteriol.">
        <title>Genome sequence and analysis of the oral bacterium Fusobacterium nucleatum strain ATCC 25586.</title>
        <authorList>
            <person name="Kapatral V."/>
            <person name="Anderson I."/>
            <person name="Ivanova N."/>
            <person name="Reznik G."/>
            <person name="Los T."/>
            <person name="Lykidis A."/>
            <person name="Bhattacharyya A."/>
            <person name="Bartman A."/>
            <person name="Gardner W."/>
            <person name="Grechkin G."/>
            <person name="Zhu L."/>
            <person name="Vasieva O."/>
            <person name="Chu L."/>
            <person name="Kogan Y."/>
            <person name="Chaga O."/>
            <person name="Goltsman E."/>
            <person name="Bernal A."/>
            <person name="Larsen N."/>
            <person name="D'Souza M."/>
            <person name="Walunas T."/>
            <person name="Pusch G."/>
            <person name="Haselkorn R."/>
            <person name="Fonstein M."/>
            <person name="Kyrpides N.C."/>
            <person name="Overbeek R."/>
        </authorList>
    </citation>
    <scope>NUCLEOTIDE SEQUENCE [LARGE SCALE GENOMIC DNA]</scope>
    <source>
        <strain>ATCC 25586 / DSM 15643 / BCRC 10681 / CIP 101130 / JCM 8532 / KCTC 2640 / LMG 13131 / VPI 4355</strain>
    </source>
</reference>
<gene>
    <name evidence="1" type="primary">carA</name>
    <name type="ordered locus">FN0421</name>
</gene>
<organism>
    <name type="scientific">Fusobacterium nucleatum subsp. nucleatum (strain ATCC 25586 / DSM 15643 / BCRC 10681 / CIP 101130 / JCM 8532 / KCTC 2640 / LMG 13131 / VPI 4355)</name>
    <dbReference type="NCBI Taxonomy" id="190304"/>
    <lineage>
        <taxon>Bacteria</taxon>
        <taxon>Fusobacteriati</taxon>
        <taxon>Fusobacteriota</taxon>
        <taxon>Fusobacteriia</taxon>
        <taxon>Fusobacteriales</taxon>
        <taxon>Fusobacteriaceae</taxon>
        <taxon>Fusobacterium</taxon>
    </lineage>
</organism>
<sequence length="358" mass="39448">MYNRQLILEDGTVYKGYAFGADVENVGEVVFNTSMTGYQEILSDPSYNGQIVTLTYPLIGNYGINRDDFESMKPCIKGMVVKEVCATPSNFRSEKTLDEALKDFGIPGIYGIDTRALTRKLRSKGVVKGCLVSIDRNVDEVVAELKKTVLPTNQIEQVSSKSISPALGRGRRVVLVDLGMKIGIVRELVSRGCDVIVVPYNTTAEEVLRLEPDGVMLTNGPGDPEDAKESIEMIKGIINKVTIFGICMGHQLVSLACGAKTYKLKFGHRGGNHPVKNILTGRVDITSQNHGYAVDIDSLNDTDLELTHIAINDRSCEGVRHKKYPVFTVQFHPEAAAGPHDTSYLFDEFIKNIDNNMK</sequence>
<dbReference type="EC" id="6.3.5.5" evidence="1"/>
<dbReference type="EMBL" id="AE009951">
    <property type="protein sequence ID" value="AAL94624.1"/>
    <property type="molecule type" value="Genomic_DNA"/>
</dbReference>
<dbReference type="RefSeq" id="NP_603325.1">
    <property type="nucleotide sequence ID" value="NC_003454.1"/>
</dbReference>
<dbReference type="RefSeq" id="WP_011016378.1">
    <property type="nucleotide sequence ID" value="NZ_CP028101.1"/>
</dbReference>
<dbReference type="SMR" id="Q8RG87"/>
<dbReference type="FunCoup" id="Q8RG87">
    <property type="interactions" value="356"/>
</dbReference>
<dbReference type="STRING" id="190304.FN0421"/>
<dbReference type="MEROPS" id="C26.A33"/>
<dbReference type="PaxDb" id="190304-FN0421"/>
<dbReference type="EnsemblBacteria" id="AAL94624">
    <property type="protein sequence ID" value="AAL94624"/>
    <property type="gene ID" value="FN0421"/>
</dbReference>
<dbReference type="GeneID" id="79783431"/>
<dbReference type="KEGG" id="fnu:FN0421"/>
<dbReference type="PATRIC" id="fig|190304.8.peg.998"/>
<dbReference type="eggNOG" id="COG0505">
    <property type="taxonomic scope" value="Bacteria"/>
</dbReference>
<dbReference type="HOGENOM" id="CLU_035901_2_1_0"/>
<dbReference type="InParanoid" id="Q8RG87"/>
<dbReference type="BioCyc" id="FNUC190304:G1FZS-1015-MONOMER"/>
<dbReference type="UniPathway" id="UPA00068">
    <property type="reaction ID" value="UER00171"/>
</dbReference>
<dbReference type="UniPathway" id="UPA00070">
    <property type="reaction ID" value="UER00115"/>
</dbReference>
<dbReference type="Proteomes" id="UP000002521">
    <property type="component" value="Chromosome"/>
</dbReference>
<dbReference type="GO" id="GO:0005951">
    <property type="term" value="C:carbamoyl-phosphate synthase complex"/>
    <property type="evidence" value="ECO:0000318"/>
    <property type="project" value="GO_Central"/>
</dbReference>
<dbReference type="GO" id="GO:0005737">
    <property type="term" value="C:cytoplasm"/>
    <property type="evidence" value="ECO:0000318"/>
    <property type="project" value="GO_Central"/>
</dbReference>
<dbReference type="GO" id="GO:0005524">
    <property type="term" value="F:ATP binding"/>
    <property type="evidence" value="ECO:0007669"/>
    <property type="project" value="UniProtKB-UniRule"/>
</dbReference>
<dbReference type="GO" id="GO:0004088">
    <property type="term" value="F:carbamoyl-phosphate synthase (glutamine-hydrolyzing) activity"/>
    <property type="evidence" value="ECO:0007669"/>
    <property type="project" value="UniProtKB-UniRule"/>
</dbReference>
<dbReference type="GO" id="GO:0004359">
    <property type="term" value="F:glutaminase activity"/>
    <property type="evidence" value="ECO:0007669"/>
    <property type="project" value="RHEA"/>
</dbReference>
<dbReference type="GO" id="GO:0006207">
    <property type="term" value="P:'de novo' pyrimidine nucleobase biosynthetic process"/>
    <property type="evidence" value="ECO:0007669"/>
    <property type="project" value="InterPro"/>
</dbReference>
<dbReference type="GO" id="GO:0044205">
    <property type="term" value="P:'de novo' UMP biosynthetic process"/>
    <property type="evidence" value="ECO:0007669"/>
    <property type="project" value="UniProtKB-UniRule"/>
</dbReference>
<dbReference type="GO" id="GO:0006541">
    <property type="term" value="P:glutamine metabolic process"/>
    <property type="evidence" value="ECO:0007669"/>
    <property type="project" value="InterPro"/>
</dbReference>
<dbReference type="GO" id="GO:0006526">
    <property type="term" value="P:L-arginine biosynthetic process"/>
    <property type="evidence" value="ECO:0000318"/>
    <property type="project" value="GO_Central"/>
</dbReference>
<dbReference type="CDD" id="cd01744">
    <property type="entry name" value="GATase1_CPSase"/>
    <property type="match status" value="1"/>
</dbReference>
<dbReference type="FunFam" id="3.40.50.880:FF:000029">
    <property type="entry name" value="Carbamoyl-phosphate synthase small chain"/>
    <property type="match status" value="1"/>
</dbReference>
<dbReference type="FunFam" id="3.50.30.20:FF:000001">
    <property type="entry name" value="Carbamoyl-phosphate synthase small chain"/>
    <property type="match status" value="1"/>
</dbReference>
<dbReference type="Gene3D" id="3.40.50.880">
    <property type="match status" value="1"/>
</dbReference>
<dbReference type="Gene3D" id="3.50.30.20">
    <property type="entry name" value="Carbamoyl-phosphate synthase small subunit, N-terminal domain"/>
    <property type="match status" value="1"/>
</dbReference>
<dbReference type="HAMAP" id="MF_01209">
    <property type="entry name" value="CPSase_S_chain"/>
    <property type="match status" value="1"/>
</dbReference>
<dbReference type="InterPro" id="IPR050472">
    <property type="entry name" value="Anth_synth/Amidotransfase"/>
</dbReference>
<dbReference type="InterPro" id="IPR006274">
    <property type="entry name" value="CarbamoylP_synth_ssu"/>
</dbReference>
<dbReference type="InterPro" id="IPR002474">
    <property type="entry name" value="CarbamoylP_synth_ssu_N"/>
</dbReference>
<dbReference type="InterPro" id="IPR036480">
    <property type="entry name" value="CarbP_synth_ssu_N_sf"/>
</dbReference>
<dbReference type="InterPro" id="IPR029062">
    <property type="entry name" value="Class_I_gatase-like"/>
</dbReference>
<dbReference type="InterPro" id="IPR035686">
    <property type="entry name" value="CPSase_GATase1"/>
</dbReference>
<dbReference type="InterPro" id="IPR017926">
    <property type="entry name" value="GATASE"/>
</dbReference>
<dbReference type="NCBIfam" id="TIGR01368">
    <property type="entry name" value="CPSaseIIsmall"/>
    <property type="match status" value="1"/>
</dbReference>
<dbReference type="NCBIfam" id="NF009475">
    <property type="entry name" value="PRK12838.1"/>
    <property type="match status" value="1"/>
</dbReference>
<dbReference type="PANTHER" id="PTHR43418:SF7">
    <property type="entry name" value="CARBAMOYL-PHOSPHATE SYNTHASE SMALL CHAIN"/>
    <property type="match status" value="1"/>
</dbReference>
<dbReference type="PANTHER" id="PTHR43418">
    <property type="entry name" value="MULTIFUNCTIONAL TRYPTOPHAN BIOSYNTHESIS PROTEIN-RELATED"/>
    <property type="match status" value="1"/>
</dbReference>
<dbReference type="Pfam" id="PF00988">
    <property type="entry name" value="CPSase_sm_chain"/>
    <property type="match status" value="1"/>
</dbReference>
<dbReference type="Pfam" id="PF00117">
    <property type="entry name" value="GATase"/>
    <property type="match status" value="1"/>
</dbReference>
<dbReference type="PRINTS" id="PR00097">
    <property type="entry name" value="ANTSNTHASEII"/>
</dbReference>
<dbReference type="PRINTS" id="PR00099">
    <property type="entry name" value="CPSGATASE"/>
</dbReference>
<dbReference type="PRINTS" id="PR00096">
    <property type="entry name" value="GATASE"/>
</dbReference>
<dbReference type="SMART" id="SM01097">
    <property type="entry name" value="CPSase_sm_chain"/>
    <property type="match status" value="1"/>
</dbReference>
<dbReference type="SUPFAM" id="SSF52021">
    <property type="entry name" value="Carbamoyl phosphate synthetase, small subunit N-terminal domain"/>
    <property type="match status" value="1"/>
</dbReference>
<dbReference type="SUPFAM" id="SSF52317">
    <property type="entry name" value="Class I glutamine amidotransferase-like"/>
    <property type="match status" value="1"/>
</dbReference>
<dbReference type="PROSITE" id="PS51273">
    <property type="entry name" value="GATASE_TYPE_1"/>
    <property type="match status" value="1"/>
</dbReference>
<keyword id="KW-0028">Amino-acid biosynthesis</keyword>
<keyword id="KW-0055">Arginine biosynthesis</keyword>
<keyword id="KW-0067">ATP-binding</keyword>
<keyword id="KW-0315">Glutamine amidotransferase</keyword>
<keyword id="KW-0436">Ligase</keyword>
<keyword id="KW-0547">Nucleotide-binding</keyword>
<keyword id="KW-0665">Pyrimidine biosynthesis</keyword>
<keyword id="KW-1185">Reference proteome</keyword>
<evidence type="ECO:0000255" key="1">
    <source>
        <dbReference type="HAMAP-Rule" id="MF_01209"/>
    </source>
</evidence>
<feature type="chain" id="PRO_0000112278" description="Carbamoyl phosphate synthase small chain">
    <location>
        <begin position="1"/>
        <end position="358"/>
    </location>
</feature>
<feature type="domain" description="Glutamine amidotransferase type-1" evidence="1">
    <location>
        <begin position="172"/>
        <end position="358"/>
    </location>
</feature>
<feature type="region of interest" description="CPSase" evidence="1">
    <location>
        <begin position="1"/>
        <end position="171"/>
    </location>
</feature>
<feature type="region of interest" description="CPSase">
    <location>
        <begin position="1"/>
        <end position="168"/>
    </location>
</feature>
<feature type="active site" description="Nucleophile" evidence="1">
    <location>
        <position position="247"/>
    </location>
</feature>
<feature type="active site" evidence="1">
    <location>
        <position position="332"/>
    </location>
</feature>
<feature type="active site" evidence="1">
    <location>
        <position position="334"/>
    </location>
</feature>
<feature type="binding site" evidence="1">
    <location>
        <position position="46"/>
    </location>
    <ligand>
        <name>L-glutamine</name>
        <dbReference type="ChEBI" id="CHEBI:58359"/>
    </ligand>
</feature>
<feature type="binding site" evidence="1">
    <location>
        <position position="220"/>
    </location>
    <ligand>
        <name>L-glutamine</name>
        <dbReference type="ChEBI" id="CHEBI:58359"/>
    </ligand>
</feature>
<feature type="binding site" evidence="1">
    <location>
        <position position="222"/>
    </location>
    <ligand>
        <name>L-glutamine</name>
        <dbReference type="ChEBI" id="CHEBI:58359"/>
    </ligand>
</feature>
<feature type="binding site" evidence="1">
    <location>
        <position position="248"/>
    </location>
    <ligand>
        <name>L-glutamine</name>
        <dbReference type="ChEBI" id="CHEBI:58359"/>
    </ligand>
</feature>
<feature type="binding site" evidence="1">
    <location>
        <position position="251"/>
    </location>
    <ligand>
        <name>L-glutamine</name>
        <dbReference type="ChEBI" id="CHEBI:58359"/>
    </ligand>
</feature>
<feature type="binding site" evidence="1">
    <location>
        <position position="289"/>
    </location>
    <ligand>
        <name>L-glutamine</name>
        <dbReference type="ChEBI" id="CHEBI:58359"/>
    </ligand>
</feature>
<feature type="binding site" evidence="1">
    <location>
        <position position="291"/>
    </location>
    <ligand>
        <name>L-glutamine</name>
        <dbReference type="ChEBI" id="CHEBI:58359"/>
    </ligand>
</feature>
<feature type="binding site" evidence="1">
    <location>
        <position position="292"/>
    </location>
    <ligand>
        <name>L-glutamine</name>
        <dbReference type="ChEBI" id="CHEBI:58359"/>
    </ligand>
</feature>
<proteinExistence type="inferred from homology"/>
<accession>Q8RG87</accession>
<comment type="function">
    <text evidence="1">Small subunit of the glutamine-dependent carbamoyl phosphate synthetase (CPSase). CPSase catalyzes the formation of carbamoyl phosphate from the ammonia moiety of glutamine, carbonate, and phosphate donated by ATP, constituting the first step of 2 biosynthetic pathways, one leading to arginine and/or urea and the other to pyrimidine nucleotides. The small subunit (glutamine amidotransferase) binds and cleaves glutamine to supply the large subunit with the substrate ammonia.</text>
</comment>
<comment type="catalytic activity">
    <reaction evidence="1">
        <text>hydrogencarbonate + L-glutamine + 2 ATP + H2O = carbamoyl phosphate + L-glutamate + 2 ADP + phosphate + 2 H(+)</text>
        <dbReference type="Rhea" id="RHEA:18633"/>
        <dbReference type="ChEBI" id="CHEBI:15377"/>
        <dbReference type="ChEBI" id="CHEBI:15378"/>
        <dbReference type="ChEBI" id="CHEBI:17544"/>
        <dbReference type="ChEBI" id="CHEBI:29985"/>
        <dbReference type="ChEBI" id="CHEBI:30616"/>
        <dbReference type="ChEBI" id="CHEBI:43474"/>
        <dbReference type="ChEBI" id="CHEBI:58228"/>
        <dbReference type="ChEBI" id="CHEBI:58359"/>
        <dbReference type="ChEBI" id="CHEBI:456216"/>
        <dbReference type="EC" id="6.3.5.5"/>
    </reaction>
</comment>
<comment type="catalytic activity">
    <molecule>Carbamoyl phosphate synthase small chain</molecule>
    <reaction evidence="1">
        <text>L-glutamine + H2O = L-glutamate + NH4(+)</text>
        <dbReference type="Rhea" id="RHEA:15889"/>
        <dbReference type="ChEBI" id="CHEBI:15377"/>
        <dbReference type="ChEBI" id="CHEBI:28938"/>
        <dbReference type="ChEBI" id="CHEBI:29985"/>
        <dbReference type="ChEBI" id="CHEBI:58359"/>
    </reaction>
</comment>
<comment type="pathway">
    <text evidence="1">Amino-acid biosynthesis; L-arginine biosynthesis; carbamoyl phosphate from bicarbonate: step 1/1.</text>
</comment>
<comment type="pathway">
    <text evidence="1">Pyrimidine metabolism; UMP biosynthesis via de novo pathway; (S)-dihydroorotate from bicarbonate: step 1/3.</text>
</comment>
<comment type="subunit">
    <text evidence="1">Composed of two chains; the small (or glutamine) chain promotes the hydrolysis of glutamine to ammonia, which is used by the large (or ammonia) chain to synthesize carbamoyl phosphate. Tetramer of heterodimers (alpha,beta)4.</text>
</comment>
<comment type="similarity">
    <text evidence="1">Belongs to the CarA family.</text>
</comment>